<comment type="function">
    <text evidence="1">Catalyzes the synthesis of alpha-ribazole-5'-phosphate from nicotinate mononucleotide (NAMN) and 5,6-dimethylbenzimidazole (DMB).</text>
</comment>
<comment type="catalytic activity">
    <reaction evidence="1">
        <text>5,6-dimethylbenzimidazole + nicotinate beta-D-ribonucleotide = alpha-ribazole 5'-phosphate + nicotinate + H(+)</text>
        <dbReference type="Rhea" id="RHEA:11196"/>
        <dbReference type="ChEBI" id="CHEBI:15378"/>
        <dbReference type="ChEBI" id="CHEBI:15890"/>
        <dbReference type="ChEBI" id="CHEBI:32544"/>
        <dbReference type="ChEBI" id="CHEBI:57502"/>
        <dbReference type="ChEBI" id="CHEBI:57918"/>
        <dbReference type="EC" id="2.4.2.21"/>
    </reaction>
</comment>
<comment type="pathway">
    <text evidence="1">Nucleoside biosynthesis; alpha-ribazole biosynthesis; alpha-ribazole from 5,6-dimethylbenzimidazole: step 1/2.</text>
</comment>
<comment type="similarity">
    <text evidence="1">Belongs to the CobT family.</text>
</comment>
<sequence length="339" mass="35136">MSASGLPFDDFRELIRNLPGPDLGAERAVREREVTLTKPAGSLGRLEEIVAWLATWTGKRTPQVNRPLVAVFAGNHGVTAKNITPFPPSVTAQMVENFAAGGAAINQICIANDLGLKVFDLALEHPTGDITEEAAMDERTCAATMAFGMEAIAGGTDLLCIGEMGIGNTTIAAAIALALFGGTAEDWVGPGTGSTGELMQRKLAAVRQAVALHQPHLQDPLEVLRCLGGREIAAMAGAILAARMEKIPVIVDGFVASAAAAVLYAANPEAIDHCMFGHVSAEPGHRKLLAKMGKEPLLDLGMRLGEGTGAALAANIVKAAALCHSGMATFEQAGVSASK</sequence>
<dbReference type="EC" id="2.4.2.21" evidence="1"/>
<dbReference type="EMBL" id="AE014291">
    <property type="protein sequence ID" value="AAN29795.1"/>
    <property type="molecule type" value="Genomic_DNA"/>
</dbReference>
<dbReference type="EMBL" id="CP002997">
    <property type="protein sequence ID" value="AEM18212.1"/>
    <property type="molecule type" value="Genomic_DNA"/>
</dbReference>
<dbReference type="RefSeq" id="WP_004690777.1">
    <property type="nucleotide sequence ID" value="NZ_KN046804.1"/>
</dbReference>
<dbReference type="SMR" id="Q8G155"/>
<dbReference type="GeneID" id="55590573"/>
<dbReference type="KEGG" id="bms:BR0867"/>
<dbReference type="KEGG" id="bsi:BS1330_I0863"/>
<dbReference type="PATRIC" id="fig|204722.21.peg.2578"/>
<dbReference type="HOGENOM" id="CLU_002982_0_1_5"/>
<dbReference type="PhylomeDB" id="Q8G155"/>
<dbReference type="UniPathway" id="UPA00061">
    <property type="reaction ID" value="UER00516"/>
</dbReference>
<dbReference type="Proteomes" id="UP000007104">
    <property type="component" value="Chromosome I"/>
</dbReference>
<dbReference type="GO" id="GO:0008939">
    <property type="term" value="F:nicotinate-nucleotide-dimethylbenzimidazole phosphoribosyltransferase activity"/>
    <property type="evidence" value="ECO:0007669"/>
    <property type="project" value="UniProtKB-UniRule"/>
</dbReference>
<dbReference type="GO" id="GO:0009236">
    <property type="term" value="P:cobalamin biosynthetic process"/>
    <property type="evidence" value="ECO:0007669"/>
    <property type="project" value="UniProtKB-KW"/>
</dbReference>
<dbReference type="CDD" id="cd02439">
    <property type="entry name" value="DMB-PRT_CobT"/>
    <property type="match status" value="1"/>
</dbReference>
<dbReference type="Gene3D" id="1.10.1610.10">
    <property type="match status" value="1"/>
</dbReference>
<dbReference type="Gene3D" id="3.40.50.10210">
    <property type="match status" value="1"/>
</dbReference>
<dbReference type="HAMAP" id="MF_00230">
    <property type="entry name" value="CobT"/>
    <property type="match status" value="1"/>
</dbReference>
<dbReference type="InterPro" id="IPR003200">
    <property type="entry name" value="Nict_dMeBzImd_PRibTrfase"/>
</dbReference>
<dbReference type="InterPro" id="IPR017846">
    <property type="entry name" value="Nict_dMeBzImd_PRibTrfase_bact"/>
</dbReference>
<dbReference type="InterPro" id="IPR023195">
    <property type="entry name" value="Nict_dMeBzImd_PRibTrfase_N"/>
</dbReference>
<dbReference type="InterPro" id="IPR036087">
    <property type="entry name" value="Nict_dMeBzImd_PRibTrfase_sf"/>
</dbReference>
<dbReference type="NCBIfam" id="TIGR03160">
    <property type="entry name" value="cobT_DBIPRT"/>
    <property type="match status" value="1"/>
</dbReference>
<dbReference type="NCBIfam" id="NF000996">
    <property type="entry name" value="PRK00105.1"/>
    <property type="match status" value="1"/>
</dbReference>
<dbReference type="PANTHER" id="PTHR43463">
    <property type="entry name" value="NICOTINATE-NUCLEOTIDE--DIMETHYLBENZIMIDAZOLE PHOSPHORIBOSYLTRANSFERASE"/>
    <property type="match status" value="1"/>
</dbReference>
<dbReference type="PANTHER" id="PTHR43463:SF1">
    <property type="entry name" value="NICOTINATE-NUCLEOTIDE--DIMETHYLBENZIMIDAZOLE PHOSPHORIBOSYLTRANSFERASE"/>
    <property type="match status" value="1"/>
</dbReference>
<dbReference type="Pfam" id="PF02277">
    <property type="entry name" value="DBI_PRT"/>
    <property type="match status" value="1"/>
</dbReference>
<dbReference type="SUPFAM" id="SSF52733">
    <property type="entry name" value="Nicotinate mononucleotide:5,6-dimethylbenzimidazole phosphoribosyltransferase (CobT)"/>
    <property type="match status" value="1"/>
</dbReference>
<keyword id="KW-0169">Cobalamin biosynthesis</keyword>
<keyword id="KW-0328">Glycosyltransferase</keyword>
<keyword id="KW-0808">Transferase</keyword>
<organism>
    <name type="scientific">Brucella suis biovar 1 (strain 1330)</name>
    <dbReference type="NCBI Taxonomy" id="204722"/>
    <lineage>
        <taxon>Bacteria</taxon>
        <taxon>Pseudomonadati</taxon>
        <taxon>Pseudomonadota</taxon>
        <taxon>Alphaproteobacteria</taxon>
        <taxon>Hyphomicrobiales</taxon>
        <taxon>Brucellaceae</taxon>
        <taxon>Brucella/Ochrobactrum group</taxon>
        <taxon>Brucella</taxon>
    </lineage>
</organism>
<proteinExistence type="inferred from homology"/>
<protein>
    <recommendedName>
        <fullName evidence="1">Nicotinate-nucleotide--dimethylbenzimidazole phosphoribosyltransferase</fullName>
        <shortName evidence="1">NN:DBI PRT</shortName>
        <ecNumber evidence="1">2.4.2.21</ecNumber>
    </recommendedName>
    <alternativeName>
        <fullName evidence="1">N(1)-alpha-phosphoribosyltransferase</fullName>
    </alternativeName>
</protein>
<reference key="1">
    <citation type="journal article" date="2002" name="Proc. Natl. Acad. Sci. U.S.A.">
        <title>The Brucella suis genome reveals fundamental similarities between animal and plant pathogens and symbionts.</title>
        <authorList>
            <person name="Paulsen I.T."/>
            <person name="Seshadri R."/>
            <person name="Nelson K.E."/>
            <person name="Eisen J.A."/>
            <person name="Heidelberg J.F."/>
            <person name="Read T.D."/>
            <person name="Dodson R.J."/>
            <person name="Umayam L.A."/>
            <person name="Brinkac L.M."/>
            <person name="Beanan M.J."/>
            <person name="Daugherty S.C."/>
            <person name="DeBoy R.T."/>
            <person name="Durkin A.S."/>
            <person name="Kolonay J.F."/>
            <person name="Madupu R."/>
            <person name="Nelson W.C."/>
            <person name="Ayodeji B."/>
            <person name="Kraul M."/>
            <person name="Shetty J."/>
            <person name="Malek J.A."/>
            <person name="Van Aken S.E."/>
            <person name="Riedmuller S."/>
            <person name="Tettelin H."/>
            <person name="Gill S.R."/>
            <person name="White O."/>
            <person name="Salzberg S.L."/>
            <person name="Hoover D.L."/>
            <person name="Lindler L.E."/>
            <person name="Halling S.M."/>
            <person name="Boyle S.M."/>
            <person name="Fraser C.M."/>
        </authorList>
    </citation>
    <scope>NUCLEOTIDE SEQUENCE [LARGE SCALE GENOMIC DNA]</scope>
    <source>
        <strain>1330</strain>
    </source>
</reference>
<reference key="2">
    <citation type="journal article" date="2011" name="J. Bacteriol.">
        <title>Revised genome sequence of Brucella suis 1330.</title>
        <authorList>
            <person name="Tae H."/>
            <person name="Shallom S."/>
            <person name="Settlage R."/>
            <person name="Preston D."/>
            <person name="Adams L.G."/>
            <person name="Garner H.R."/>
        </authorList>
    </citation>
    <scope>NUCLEOTIDE SEQUENCE [LARGE SCALE GENOMIC DNA]</scope>
    <source>
        <strain>1330</strain>
    </source>
</reference>
<feature type="chain" id="PRO_0000167039" description="Nicotinate-nucleotide--dimethylbenzimidazole phosphoribosyltransferase">
    <location>
        <begin position="1"/>
        <end position="339"/>
    </location>
</feature>
<feature type="active site" description="Proton acceptor" evidence="1">
    <location>
        <position position="306"/>
    </location>
</feature>
<gene>
    <name evidence="1" type="primary">cobT</name>
    <name type="ordered locus">BR0867</name>
    <name type="ordered locus">BS1330_I0863</name>
</gene>
<accession>Q8G155</accession>
<accession>G0K995</accession>
<evidence type="ECO:0000255" key="1">
    <source>
        <dbReference type="HAMAP-Rule" id="MF_00230"/>
    </source>
</evidence>
<name>COBT_BRUSU</name>